<feature type="chain" id="PRO_0000376388" description="NADH-quinone oxidoreductase subunit B 2">
    <location>
        <begin position="1"/>
        <end position="232"/>
    </location>
</feature>
<feature type="region of interest" description="Disordered" evidence="2">
    <location>
        <begin position="173"/>
        <end position="232"/>
    </location>
</feature>
<feature type="compositionally biased region" description="Acidic residues" evidence="2">
    <location>
        <begin position="196"/>
        <end position="206"/>
    </location>
</feature>
<feature type="compositionally biased region" description="Gly residues" evidence="2">
    <location>
        <begin position="210"/>
        <end position="222"/>
    </location>
</feature>
<feature type="binding site" evidence="1">
    <location>
        <position position="52"/>
    </location>
    <ligand>
        <name>[4Fe-4S] cluster</name>
        <dbReference type="ChEBI" id="CHEBI:49883"/>
    </ligand>
</feature>
<feature type="binding site" evidence="1">
    <location>
        <position position="53"/>
    </location>
    <ligand>
        <name>[4Fe-4S] cluster</name>
        <dbReference type="ChEBI" id="CHEBI:49883"/>
    </ligand>
</feature>
<feature type="binding site" evidence="1">
    <location>
        <position position="118"/>
    </location>
    <ligand>
        <name>[4Fe-4S] cluster</name>
        <dbReference type="ChEBI" id="CHEBI:49883"/>
    </ligand>
</feature>
<feature type="binding site" evidence="1">
    <location>
        <position position="148"/>
    </location>
    <ligand>
        <name>[4Fe-4S] cluster</name>
        <dbReference type="ChEBI" id="CHEBI:49883"/>
    </ligand>
</feature>
<reference key="1">
    <citation type="journal article" date="2002" name="Nature">
        <title>Complete genome sequence of the model actinomycete Streptomyces coelicolor A3(2).</title>
        <authorList>
            <person name="Bentley S.D."/>
            <person name="Chater K.F."/>
            <person name="Cerdeno-Tarraga A.-M."/>
            <person name="Challis G.L."/>
            <person name="Thomson N.R."/>
            <person name="James K.D."/>
            <person name="Harris D.E."/>
            <person name="Quail M.A."/>
            <person name="Kieser H."/>
            <person name="Harper D."/>
            <person name="Bateman A."/>
            <person name="Brown S."/>
            <person name="Chandra G."/>
            <person name="Chen C.W."/>
            <person name="Collins M."/>
            <person name="Cronin A."/>
            <person name="Fraser A."/>
            <person name="Goble A."/>
            <person name="Hidalgo J."/>
            <person name="Hornsby T."/>
            <person name="Howarth S."/>
            <person name="Huang C.-H."/>
            <person name="Kieser T."/>
            <person name="Larke L."/>
            <person name="Murphy L.D."/>
            <person name="Oliver K."/>
            <person name="O'Neil S."/>
            <person name="Rabbinowitsch E."/>
            <person name="Rajandream M.A."/>
            <person name="Rutherford K.M."/>
            <person name="Rutter S."/>
            <person name="Seeger K."/>
            <person name="Saunders D."/>
            <person name="Sharp S."/>
            <person name="Squares R."/>
            <person name="Squares S."/>
            <person name="Taylor K."/>
            <person name="Warren T."/>
            <person name="Wietzorrek A."/>
            <person name="Woodward J.R."/>
            <person name="Barrell B.G."/>
            <person name="Parkhill J."/>
            <person name="Hopwood D.A."/>
        </authorList>
    </citation>
    <scope>NUCLEOTIDE SEQUENCE [LARGE SCALE GENOMIC DNA]</scope>
    <source>
        <strain>ATCC BAA-471 / A3(2) / M145</strain>
    </source>
</reference>
<organism>
    <name type="scientific">Streptomyces coelicolor (strain ATCC BAA-471 / A3(2) / M145)</name>
    <dbReference type="NCBI Taxonomy" id="100226"/>
    <lineage>
        <taxon>Bacteria</taxon>
        <taxon>Bacillati</taxon>
        <taxon>Actinomycetota</taxon>
        <taxon>Actinomycetes</taxon>
        <taxon>Kitasatosporales</taxon>
        <taxon>Streptomycetaceae</taxon>
        <taxon>Streptomyces</taxon>
        <taxon>Streptomyces albidoflavus group</taxon>
    </lineage>
</organism>
<comment type="function">
    <text evidence="1">NDH-1 shuttles electrons from NADH, via FMN and iron-sulfur (Fe-S) centers, to quinones in the respiratory chain. The immediate electron acceptor for the enzyme in this species is believed to be a menaquinone. Couples the redox reaction to proton translocation (for every two electrons transferred, four hydrogen ions are translocated across the cytoplasmic membrane), and thus conserves the redox energy in a proton gradient.</text>
</comment>
<comment type="catalytic activity">
    <reaction evidence="1">
        <text>a quinone + NADH + 5 H(+)(in) = a quinol + NAD(+) + 4 H(+)(out)</text>
        <dbReference type="Rhea" id="RHEA:57888"/>
        <dbReference type="ChEBI" id="CHEBI:15378"/>
        <dbReference type="ChEBI" id="CHEBI:24646"/>
        <dbReference type="ChEBI" id="CHEBI:57540"/>
        <dbReference type="ChEBI" id="CHEBI:57945"/>
        <dbReference type="ChEBI" id="CHEBI:132124"/>
    </reaction>
</comment>
<comment type="cofactor">
    <cofactor evidence="1">
        <name>[4Fe-4S] cluster</name>
        <dbReference type="ChEBI" id="CHEBI:49883"/>
    </cofactor>
    <text evidence="1">Binds 1 [4Fe-4S] cluster.</text>
</comment>
<comment type="subunit">
    <text evidence="1">NDH-1 is composed of 14 different subunits. Subunits NuoB, C, D, E, F, and G constitute the peripheral sector of the complex.</text>
</comment>
<comment type="subcellular location">
    <subcellularLocation>
        <location evidence="1">Cell membrane</location>
        <topology evidence="1">Peripheral membrane protein</topology>
        <orientation evidence="1">Cytoplasmic side</orientation>
    </subcellularLocation>
</comment>
<comment type="similarity">
    <text evidence="1">Belongs to the complex I 20 kDa subunit family.</text>
</comment>
<evidence type="ECO:0000255" key="1">
    <source>
        <dbReference type="HAMAP-Rule" id="MF_01356"/>
    </source>
</evidence>
<evidence type="ECO:0000256" key="2">
    <source>
        <dbReference type="SAM" id="MobiDB-lite"/>
    </source>
</evidence>
<proteinExistence type="inferred from homology"/>
<gene>
    <name evidence="1" type="primary">nuoB2</name>
    <name type="ordered locus">SCO4600</name>
    <name type="ORF">SCD20.18</name>
</gene>
<dbReference type="EC" id="7.1.1.-" evidence="1"/>
<dbReference type="EMBL" id="AL939120">
    <property type="protein sequence ID" value="CAC08301.1"/>
    <property type="molecule type" value="Genomic_DNA"/>
</dbReference>
<dbReference type="RefSeq" id="NP_628762.1">
    <property type="nucleotide sequence ID" value="NC_003888.3"/>
</dbReference>
<dbReference type="SMR" id="Q9F2W1"/>
<dbReference type="STRING" id="100226.gene:17762245"/>
<dbReference type="PaxDb" id="100226-SCO4600"/>
<dbReference type="KEGG" id="sco:SCO4600"/>
<dbReference type="PATRIC" id="fig|100226.15.peg.4672"/>
<dbReference type="eggNOG" id="COG0377">
    <property type="taxonomic scope" value="Bacteria"/>
</dbReference>
<dbReference type="HOGENOM" id="CLU_055737_4_1_11"/>
<dbReference type="InParanoid" id="Q9F2W1"/>
<dbReference type="OrthoDB" id="9786737at2"/>
<dbReference type="PhylomeDB" id="Q9F2W1"/>
<dbReference type="Proteomes" id="UP000001973">
    <property type="component" value="Chromosome"/>
</dbReference>
<dbReference type="GO" id="GO:0005886">
    <property type="term" value="C:plasma membrane"/>
    <property type="evidence" value="ECO:0007669"/>
    <property type="project" value="UniProtKB-SubCell"/>
</dbReference>
<dbReference type="GO" id="GO:0045271">
    <property type="term" value="C:respiratory chain complex I"/>
    <property type="evidence" value="ECO:0000318"/>
    <property type="project" value="GO_Central"/>
</dbReference>
<dbReference type="GO" id="GO:0051539">
    <property type="term" value="F:4 iron, 4 sulfur cluster binding"/>
    <property type="evidence" value="ECO:0007669"/>
    <property type="project" value="UniProtKB-KW"/>
</dbReference>
<dbReference type="GO" id="GO:0005506">
    <property type="term" value="F:iron ion binding"/>
    <property type="evidence" value="ECO:0007669"/>
    <property type="project" value="UniProtKB-UniRule"/>
</dbReference>
<dbReference type="GO" id="GO:0008137">
    <property type="term" value="F:NADH dehydrogenase (ubiquinone) activity"/>
    <property type="evidence" value="ECO:0000318"/>
    <property type="project" value="GO_Central"/>
</dbReference>
<dbReference type="GO" id="GO:0050136">
    <property type="term" value="F:NADH:ubiquinone reductase (non-electrogenic) activity"/>
    <property type="evidence" value="ECO:0007669"/>
    <property type="project" value="UniProtKB-UniRule"/>
</dbReference>
<dbReference type="GO" id="GO:0048038">
    <property type="term" value="F:quinone binding"/>
    <property type="evidence" value="ECO:0007669"/>
    <property type="project" value="UniProtKB-KW"/>
</dbReference>
<dbReference type="GO" id="GO:0009060">
    <property type="term" value="P:aerobic respiration"/>
    <property type="evidence" value="ECO:0000318"/>
    <property type="project" value="GO_Central"/>
</dbReference>
<dbReference type="GO" id="GO:0015990">
    <property type="term" value="P:electron transport coupled proton transport"/>
    <property type="evidence" value="ECO:0000318"/>
    <property type="project" value="GO_Central"/>
</dbReference>
<dbReference type="FunFam" id="3.40.50.12280:FF:000002">
    <property type="entry name" value="NADH-quinone oxidoreductase subunit B"/>
    <property type="match status" value="1"/>
</dbReference>
<dbReference type="Gene3D" id="3.40.50.12280">
    <property type="match status" value="1"/>
</dbReference>
<dbReference type="HAMAP" id="MF_01356">
    <property type="entry name" value="NDH1_NuoB"/>
    <property type="match status" value="1"/>
</dbReference>
<dbReference type="InterPro" id="IPR006137">
    <property type="entry name" value="NADH_UbQ_OxRdtase-like_20kDa"/>
</dbReference>
<dbReference type="InterPro" id="IPR006138">
    <property type="entry name" value="NADH_UQ_OxRdtase_20Kd_su"/>
</dbReference>
<dbReference type="NCBIfam" id="TIGR01957">
    <property type="entry name" value="nuoB_fam"/>
    <property type="match status" value="1"/>
</dbReference>
<dbReference type="NCBIfam" id="NF005012">
    <property type="entry name" value="PRK06411.1"/>
    <property type="match status" value="1"/>
</dbReference>
<dbReference type="PANTHER" id="PTHR11995">
    <property type="entry name" value="NADH DEHYDROGENASE"/>
    <property type="match status" value="1"/>
</dbReference>
<dbReference type="PANTHER" id="PTHR11995:SF33">
    <property type="entry name" value="NADH-QUINONE OXIDOREDUCTASE SUBUNIT B 2"/>
    <property type="match status" value="1"/>
</dbReference>
<dbReference type="Pfam" id="PF01058">
    <property type="entry name" value="Oxidored_q6"/>
    <property type="match status" value="1"/>
</dbReference>
<dbReference type="SUPFAM" id="SSF56770">
    <property type="entry name" value="HydA/Nqo6-like"/>
    <property type="match status" value="1"/>
</dbReference>
<keyword id="KW-0004">4Fe-4S</keyword>
<keyword id="KW-1003">Cell membrane</keyword>
<keyword id="KW-0408">Iron</keyword>
<keyword id="KW-0411">Iron-sulfur</keyword>
<keyword id="KW-0472">Membrane</keyword>
<keyword id="KW-0479">Metal-binding</keyword>
<keyword id="KW-0520">NAD</keyword>
<keyword id="KW-0874">Quinone</keyword>
<keyword id="KW-1185">Reference proteome</keyword>
<keyword id="KW-1278">Translocase</keyword>
<keyword id="KW-0813">Transport</keyword>
<accession>Q9F2W1</accession>
<name>NUOB2_STRCO</name>
<sequence length="232" mass="24854">MNPGEPADPAPVPLPEPKRLGTLARLAPEPMKVVLNWGRRYSLWVFNFGLACCAIEFIAASMARHDFIRLGVIPFAPGPRQADLMVVSGTVTDKMAPAVKRLYEQMPEPKYVISFGACSNCGGPYWDSYSVTKGVDQIIPVDVYVPGCPPRPEALLQGILKLQEKIARESLGERYGVSPRPSTAALQSGLVRPPEPEPEPEPEPEPEPGQGPGQGPGSGEGTDTGSDAGRGR</sequence>
<protein>
    <recommendedName>
        <fullName evidence="1">NADH-quinone oxidoreductase subunit B 2</fullName>
        <ecNumber evidence="1">7.1.1.-</ecNumber>
    </recommendedName>
    <alternativeName>
        <fullName evidence="1">NADH dehydrogenase I subunit B 2</fullName>
    </alternativeName>
    <alternativeName>
        <fullName evidence="1">NDH-1 subunit B 2</fullName>
    </alternativeName>
</protein>